<protein>
    <recommendedName>
        <fullName>Early E3 20.3 kDa glycoprotein</fullName>
    </recommendedName>
</protein>
<feature type="chain" id="PRO_0000221754" description="Early E3 20.3 kDa glycoprotein">
    <location>
        <begin position="1"/>
        <end position="181"/>
    </location>
</feature>
<feature type="glycosylation site" description="N-linked (GlcNAc...) asparagine; by host" evidence="1">
    <location>
        <position position="29"/>
    </location>
</feature>
<feature type="glycosylation site" description="N-linked (GlcNAc...) asparagine; by host" evidence="1">
    <location>
        <position position="57"/>
    </location>
</feature>
<feature type="glycosylation site" description="N-linked (GlcNAc...) asparagine; by host" evidence="1">
    <location>
        <position position="70"/>
    </location>
</feature>
<feature type="glycosylation site" description="N-linked (GlcNAc...) asparagine; by host" evidence="1">
    <location>
        <position position="75"/>
    </location>
</feature>
<feature type="sequence conflict" description="In Ref. 3; AAN62496." evidence="2" ref="3">
    <original>A</original>
    <variation>T</variation>
    <location>
        <position position="44"/>
    </location>
</feature>
<keyword id="KW-0244">Early protein</keyword>
<keyword id="KW-0325">Glycoprotein</keyword>
<name>E320_ADE1P</name>
<organism>
    <name type="scientific">Human adenovirus B serotype 11 (strain Slobiski)</name>
    <name type="common">HAdV-11</name>
    <name type="synonym">Human adenovirus 11P (strain Slobiski)</name>
    <dbReference type="NCBI Taxonomy" id="343462"/>
    <lineage>
        <taxon>Viruses</taxon>
        <taxon>Varidnaviria</taxon>
        <taxon>Bamfordvirae</taxon>
        <taxon>Preplasmiviricota</taxon>
        <taxon>Tectiliviricetes</taxon>
        <taxon>Rowavirales</taxon>
        <taxon>Adenoviridae</taxon>
        <taxon>Mastadenovirus</taxon>
        <taxon>Human mastadenovirus B</taxon>
    </lineage>
</organism>
<reference key="1">
    <citation type="journal article" date="1992" name="Virology">
        <title>The nucleotide sequence of adenovirus type 11 early 3 region: comparison of genome type Ad11p and Ad11a.</title>
        <authorList>
            <person name="Mei Y.-F."/>
            <person name="Wadell G."/>
        </authorList>
    </citation>
    <scope>NUCLEOTIDE SEQUENCE [GENOMIC DNA]</scope>
</reference>
<reference key="2">
    <citation type="journal article" date="2003" name="J. Gen. Virol.">
        <title>Comparative analysis of the genome organization of human adenovirus 11, a member of the human adenovirus species B, and the commonly used human adenovirus 5 vector, a member of species C.</title>
        <authorList>
            <person name="Mei Y.-F."/>
            <person name="Skog J."/>
            <person name="Lindman K."/>
            <person name="Wadell G."/>
        </authorList>
    </citation>
    <scope>NUCLEOTIDE SEQUENCE [GENOMIC DNA]</scope>
</reference>
<reference key="3">
    <citation type="journal article" date="2003" name="Virology">
        <title>The complete nucleotide sequence, genome organization, and origin of human adenovirus type 11.</title>
        <authorList>
            <person name="Stone D."/>
            <person name="Furthmann A."/>
            <person name="Sandig V."/>
            <person name="Lieber A."/>
        </authorList>
    </citation>
    <scope>NUCLEOTIDE SEQUENCE [GENOMIC DNA]</scope>
</reference>
<sequence length="181" mass="20335">MASLTSLIFVSIVTAAHGQTVVSIPLGHNYTLIGPPITSEVIWAKLGSVDYFDIICNKTKPIIVTCNIQNLTLINVSKVYSGYYYGYDRYSSQYRNYLVRVTQLKTTKMPNMAKIRSDDNSLETFTSPTTPDEKNIPDSMIAIVAAVAVVMALIIICMLLYACRYKKFHPKKQDLLLRLNI</sequence>
<evidence type="ECO:0000255" key="1"/>
<evidence type="ECO:0000305" key="2"/>
<dbReference type="EMBL" id="AF532578">
    <property type="protein sequence ID" value="AAP49189.1"/>
    <property type="molecule type" value="Genomic_DNA"/>
</dbReference>
<dbReference type="EMBL" id="AY163756">
    <property type="protein sequence ID" value="AAN62496.1"/>
    <property type="molecule type" value="Genomic_DNA"/>
</dbReference>
<dbReference type="PIR" id="B44057">
    <property type="entry name" value="B44057"/>
</dbReference>
<dbReference type="SMR" id="P35768"/>
<dbReference type="Proteomes" id="UP000128793">
    <property type="component" value="Segment"/>
</dbReference>
<dbReference type="Proteomes" id="UP000152074">
    <property type="component" value="Segment"/>
</dbReference>
<dbReference type="InterPro" id="IPR003471">
    <property type="entry name" value="Adeno_E3_CR1"/>
</dbReference>
<dbReference type="InterPro" id="IPR003470">
    <property type="entry name" value="Adeno_E3_CR2"/>
</dbReference>
<dbReference type="Pfam" id="PF02440">
    <property type="entry name" value="Adeno_E3_CR1"/>
    <property type="match status" value="1"/>
</dbReference>
<dbReference type="Pfam" id="PF02439">
    <property type="entry name" value="Adeno_E3_CR2"/>
    <property type="match status" value="1"/>
</dbReference>
<comment type="function">
    <text>E3 proteins seem to be dispensable for virus growth in tissue culture cells. They are potentially important for virus growth under special conditions; E3 region may help adenoviruses to evade the immune surveillance of the host.</text>
</comment>
<comment type="similarity">
    <text evidence="2">Belongs to the adenoviridae E3_20 family.</text>
</comment>
<accession>P35768</accession>
<proteinExistence type="inferred from homology"/>
<organismHost>
    <name type="scientific">Homo sapiens</name>
    <name type="common">Human</name>
    <dbReference type="NCBI Taxonomy" id="9606"/>
</organismHost>